<gene>
    <name evidence="4" type="primary">ABHD17A</name>
</gene>
<keyword id="KW-1003">Cell membrane</keyword>
<keyword id="KW-0966">Cell projection</keyword>
<keyword id="KW-0967">Endosome</keyword>
<keyword id="KW-0378">Hydrolase</keyword>
<keyword id="KW-0449">Lipoprotein</keyword>
<keyword id="KW-0472">Membrane</keyword>
<keyword id="KW-0564">Palmitate</keyword>
<keyword id="KW-0597">Phosphoprotein</keyword>
<keyword id="KW-0628">Postsynaptic cell membrane</keyword>
<keyword id="KW-1185">Reference proteome</keyword>
<keyword id="KW-0770">Synapse</keyword>
<name>AB17A_BOVIN</name>
<protein>
    <recommendedName>
        <fullName evidence="5">Alpha/beta hydrolase domain-containing protein 17A</fullName>
        <shortName evidence="4">Abhydrolase domain-containing protein 17A</shortName>
        <ecNumber evidence="4">3.1.2.22</ecNumber>
    </recommendedName>
</protein>
<proteinExistence type="evidence at transcript level"/>
<dbReference type="EC" id="3.1.2.22" evidence="4"/>
<dbReference type="EMBL" id="BC113352">
    <property type="protein sequence ID" value="AAI13353.1"/>
    <property type="molecule type" value="mRNA"/>
</dbReference>
<dbReference type="RefSeq" id="NP_001040001.1">
    <property type="nucleotide sequence ID" value="NM_001046536.1"/>
</dbReference>
<dbReference type="SMR" id="Q2HJ19"/>
<dbReference type="FunCoup" id="Q2HJ19">
    <property type="interactions" value="1388"/>
</dbReference>
<dbReference type="STRING" id="9913.ENSBTAP00000035338"/>
<dbReference type="ESTHER" id="bovin-AB17A">
    <property type="family name" value="ABHD17-depalmitoylase"/>
</dbReference>
<dbReference type="PaxDb" id="9913-ENSBTAP00000035338"/>
<dbReference type="GeneID" id="614425"/>
<dbReference type="KEGG" id="bta:614425"/>
<dbReference type="CTD" id="81926"/>
<dbReference type="eggNOG" id="KOG1552">
    <property type="taxonomic scope" value="Eukaryota"/>
</dbReference>
<dbReference type="InParanoid" id="Q2HJ19"/>
<dbReference type="OrthoDB" id="446723at2759"/>
<dbReference type="Proteomes" id="UP000009136">
    <property type="component" value="Unplaced"/>
</dbReference>
<dbReference type="GO" id="GO:0043197">
    <property type="term" value="C:dendritic spine"/>
    <property type="evidence" value="ECO:0007669"/>
    <property type="project" value="UniProtKB-SubCell"/>
</dbReference>
<dbReference type="GO" id="GO:0010008">
    <property type="term" value="C:endosome membrane"/>
    <property type="evidence" value="ECO:0000318"/>
    <property type="project" value="GO_Central"/>
</dbReference>
<dbReference type="GO" id="GO:0005886">
    <property type="term" value="C:plasma membrane"/>
    <property type="evidence" value="ECO:0000318"/>
    <property type="project" value="GO_Central"/>
</dbReference>
<dbReference type="GO" id="GO:0098839">
    <property type="term" value="C:postsynaptic density membrane"/>
    <property type="evidence" value="ECO:0007669"/>
    <property type="project" value="UniProtKB-SubCell"/>
</dbReference>
<dbReference type="GO" id="GO:0008474">
    <property type="term" value="F:palmitoyl-(protein) hydrolase activity"/>
    <property type="evidence" value="ECO:0000318"/>
    <property type="project" value="GO_Central"/>
</dbReference>
<dbReference type="GO" id="GO:0099175">
    <property type="term" value="P:regulation of postsynapse organization"/>
    <property type="evidence" value="ECO:0000318"/>
    <property type="project" value="GO_Central"/>
</dbReference>
<dbReference type="FunFam" id="3.40.50.1820:FF:000008">
    <property type="entry name" value="Alpha/beta hydrolase domain-containing protein 17B"/>
    <property type="match status" value="1"/>
</dbReference>
<dbReference type="Gene3D" id="3.40.50.1820">
    <property type="entry name" value="alpha/beta hydrolase"/>
    <property type="match status" value="1"/>
</dbReference>
<dbReference type="InterPro" id="IPR029058">
    <property type="entry name" value="AB_hydrolase_fold"/>
</dbReference>
<dbReference type="InterPro" id="IPR022742">
    <property type="entry name" value="Hydrolase_4"/>
</dbReference>
<dbReference type="PANTHER" id="PTHR12277">
    <property type="entry name" value="ALPHA/BETA HYDROLASE DOMAIN-CONTAINING PROTEIN"/>
    <property type="match status" value="1"/>
</dbReference>
<dbReference type="PANTHER" id="PTHR12277:SF52">
    <property type="entry name" value="ALPHA_BETA HYDROLASE DOMAIN-CONTAINING PROTEIN 17A"/>
    <property type="match status" value="1"/>
</dbReference>
<dbReference type="Pfam" id="PF12146">
    <property type="entry name" value="Hydrolase_4"/>
    <property type="match status" value="1"/>
</dbReference>
<dbReference type="SUPFAM" id="SSF53474">
    <property type="entry name" value="alpha/beta-Hydrolases"/>
    <property type="match status" value="1"/>
</dbReference>
<reference key="1">
    <citation type="submission" date="2006-02" db="EMBL/GenBank/DDBJ databases">
        <authorList>
            <consortium name="NIH - Mammalian Gene Collection (MGC) project"/>
        </authorList>
    </citation>
    <scope>NUCLEOTIDE SEQUENCE [LARGE SCALE MRNA]</scope>
    <source>
        <strain>Hereford</strain>
        <tissue>Uterus</tissue>
    </source>
</reference>
<accession>Q2HJ19</accession>
<evidence type="ECO:0000250" key="1">
    <source>
        <dbReference type="UniProtKB" id="O75608"/>
    </source>
</evidence>
<evidence type="ECO:0000250" key="2">
    <source>
        <dbReference type="UniProtKB" id="Q5XIJ5"/>
    </source>
</evidence>
<evidence type="ECO:0000250" key="3">
    <source>
        <dbReference type="UniProtKB" id="Q7M759"/>
    </source>
</evidence>
<evidence type="ECO:0000250" key="4">
    <source>
        <dbReference type="UniProtKB" id="Q96GS6"/>
    </source>
</evidence>
<evidence type="ECO:0000305" key="5"/>
<comment type="function">
    <text evidence="2 4">Hydrolyzes fatty acids from S-acylated cysteine residues in proteins. Has depalmitoylating activity towards NRAS. Has depalmitoylating activity towards DLG4/PSD95. May have depalmitoylating activity towards MAP6.</text>
</comment>
<comment type="catalytic activity">
    <reaction evidence="4">
        <text>S-hexadecanoyl-L-cysteinyl-[protein] + H2O = L-cysteinyl-[protein] + hexadecanoate + H(+)</text>
        <dbReference type="Rhea" id="RHEA:19233"/>
        <dbReference type="Rhea" id="RHEA-COMP:10131"/>
        <dbReference type="Rhea" id="RHEA-COMP:11032"/>
        <dbReference type="ChEBI" id="CHEBI:7896"/>
        <dbReference type="ChEBI" id="CHEBI:15377"/>
        <dbReference type="ChEBI" id="CHEBI:15378"/>
        <dbReference type="ChEBI" id="CHEBI:29950"/>
        <dbReference type="ChEBI" id="CHEBI:74151"/>
        <dbReference type="EC" id="3.1.2.22"/>
    </reaction>
</comment>
<comment type="subcellular location">
    <subcellularLocation>
        <location evidence="4">Cell membrane</location>
        <topology evidence="4">Lipid-anchor</topology>
        <orientation evidence="4">Cytoplasmic side</orientation>
    </subcellularLocation>
    <subcellularLocation>
        <location evidence="4">Endosome membrane</location>
        <topology evidence="4">Lipid-anchor</topology>
        <orientation evidence="4">Cytoplasmic side</orientation>
    </subcellularLocation>
    <subcellularLocation>
        <location evidence="2">Cell projection</location>
        <location evidence="2">Dendritic spine</location>
    </subcellularLocation>
    <subcellularLocation>
        <location evidence="2">Postsynaptic density membrane</location>
    </subcellularLocation>
</comment>
<comment type="PTM">
    <text evidence="3">Palmitoylated on cysteine residues located in a cysteine cluster at the N-terminus which promotes membrane localization. Palmitoylation is required for post-synaptic localization and for depalmitoylating activity towards DLG4/PSD95.</text>
</comment>
<comment type="similarity">
    <text evidence="5">Belongs to the AB hydrolase superfamily. ABHD17 family.</text>
</comment>
<feature type="chain" id="PRO_0000297508" description="Alpha/beta hydrolase domain-containing protein 17A">
    <location>
        <begin position="1"/>
        <end position="310"/>
    </location>
</feature>
<feature type="active site" description="Charge relay system" evidence="4">
    <location>
        <position position="190"/>
    </location>
</feature>
<feature type="active site" description="Charge relay system" evidence="1">
    <location>
        <position position="255"/>
    </location>
</feature>
<feature type="active site" description="Charge relay system" evidence="1">
    <location>
        <position position="284"/>
    </location>
</feature>
<feature type="modified residue" description="Phosphoserine" evidence="4">
    <location>
        <position position="307"/>
    </location>
</feature>
<organism>
    <name type="scientific">Bos taurus</name>
    <name type="common">Bovine</name>
    <dbReference type="NCBI Taxonomy" id="9913"/>
    <lineage>
        <taxon>Eukaryota</taxon>
        <taxon>Metazoa</taxon>
        <taxon>Chordata</taxon>
        <taxon>Craniata</taxon>
        <taxon>Vertebrata</taxon>
        <taxon>Euteleostomi</taxon>
        <taxon>Mammalia</taxon>
        <taxon>Eutheria</taxon>
        <taxon>Laurasiatheria</taxon>
        <taxon>Artiodactyla</taxon>
        <taxon>Ruminantia</taxon>
        <taxon>Pecora</taxon>
        <taxon>Bovidae</taxon>
        <taxon>Bovinae</taxon>
        <taxon>Bos</taxon>
    </lineage>
</organism>
<sequence length="310" mass="34102">MNGLSVTELCCLFCCPPCPGRIAAKLAFLPPEPTYSLVPEPEPGPGGAGAAPSGNLRALAGTPGRWKLHLMERADFQYSQRELDTIEVFLTKSSRGNRISCMYVRCVPGARYTVFFSHGNAVDLGQMSSFYIGLGTRINCNIFSYDYSGYGVSSGKPSEKNLYADIDAAWQALRTRYGISPDSIVLYGQSIGTVPTVDLASRYECAAVVLHSPLTSGMRVAFPDTKKTYCFDAFPNIEKVSKITSPVLIIHGTEDEVIDFSHGLALYERCPKAVEPLWVEGAGHNDIELYSQYLERLRRFISQELPSQRA</sequence>